<proteinExistence type="predicted"/>
<feature type="chain" id="PRO_0000338013" description="Uncharacterized protein A-92">
    <location>
        <begin position="1"/>
        <end position="92"/>
    </location>
</feature>
<reference key="1">
    <citation type="journal article" date="1991" name="Virology">
        <title>Complete nucleotide sequence of the virus SSV1 of the archaebacterium Sulfolobus shibatae.</title>
        <authorList>
            <person name="Palm P."/>
            <person name="Schleper C."/>
            <person name="Grampp B."/>
            <person name="Yeats S."/>
            <person name="McWilliam P."/>
            <person name="Reiter W.-D."/>
            <person name="Zillig W."/>
        </authorList>
    </citation>
    <scope>NUCLEOTIDE SEQUENCE [GENOMIC DNA]</scope>
</reference>
<gene>
    <name type="ORF">a92</name>
</gene>
<accession>P0C6K8</accession>
<dbReference type="EMBL" id="X07234">
    <property type="status" value="NOT_ANNOTATED_CDS"/>
    <property type="molecule type" value="Genomic_DNA"/>
</dbReference>
<dbReference type="Proteomes" id="UP000000854">
    <property type="component" value="Genome"/>
</dbReference>
<name>A92_SSV1</name>
<sequence>MIGIPAKYFEIGVVIDSTFIIMSLLLRKSKRQRENSFDLRKHGRLLGLYLIIASASALIVSHLALYTNYMNYLTGLSLNAFLFYLGLRCLHV</sequence>
<keyword id="KW-1185">Reference proteome</keyword>
<organism>
    <name type="scientific">Sulfolobus spindle-shape virus 1</name>
    <name type="common">SSV1</name>
    <dbReference type="NCBI Taxonomy" id="244589"/>
    <lineage>
        <taxon>Viruses</taxon>
        <taxon>Viruses incertae sedis</taxon>
        <taxon>Fuselloviridae</taxon>
        <taxon>Alphafusellovirus</taxon>
    </lineage>
</organism>
<protein>
    <recommendedName>
        <fullName>Uncharacterized protein A-92</fullName>
    </recommendedName>
</protein>
<organismHost>
    <name type="scientific">Saccharolobus solfataricus</name>
    <name type="common">Sulfolobus solfataricus</name>
    <dbReference type="NCBI Taxonomy" id="2287"/>
</organismHost>